<dbReference type="EMBL" id="AP008232">
    <property type="protein sequence ID" value="BAE75272.1"/>
    <property type="molecule type" value="Genomic_DNA"/>
</dbReference>
<dbReference type="RefSeq" id="WP_011411727.1">
    <property type="nucleotide sequence ID" value="NC_007712.1"/>
</dbReference>
<dbReference type="SMR" id="Q2NRF3"/>
<dbReference type="STRING" id="343509.SG1997"/>
<dbReference type="KEGG" id="sgl:SG1997"/>
<dbReference type="eggNOG" id="COG0354">
    <property type="taxonomic scope" value="Bacteria"/>
</dbReference>
<dbReference type="HOGENOM" id="CLU_007884_6_1_6"/>
<dbReference type="OrthoDB" id="9796287at2"/>
<dbReference type="Proteomes" id="UP000001932">
    <property type="component" value="Chromosome"/>
</dbReference>
<dbReference type="GO" id="GO:0005737">
    <property type="term" value="C:cytoplasm"/>
    <property type="evidence" value="ECO:0007669"/>
    <property type="project" value="UniProtKB-SubCell"/>
</dbReference>
<dbReference type="GO" id="GO:0005542">
    <property type="term" value="F:folic acid binding"/>
    <property type="evidence" value="ECO:0007669"/>
    <property type="project" value="UniProtKB-UniRule"/>
</dbReference>
<dbReference type="GO" id="GO:0016226">
    <property type="term" value="P:iron-sulfur cluster assembly"/>
    <property type="evidence" value="ECO:0007669"/>
    <property type="project" value="TreeGrafter"/>
</dbReference>
<dbReference type="GO" id="GO:0009451">
    <property type="term" value="P:RNA modification"/>
    <property type="evidence" value="ECO:0007669"/>
    <property type="project" value="InterPro"/>
</dbReference>
<dbReference type="GO" id="GO:0008033">
    <property type="term" value="P:tRNA processing"/>
    <property type="evidence" value="ECO:0007669"/>
    <property type="project" value="UniProtKB-UniRule"/>
</dbReference>
<dbReference type="FunFam" id="2.40.30.160:FF:000001">
    <property type="entry name" value="tRNA-modifying protein YgfZ"/>
    <property type="match status" value="1"/>
</dbReference>
<dbReference type="FunFam" id="3.30.70.1400:FF:000002">
    <property type="entry name" value="tRNA-modifying protein YgfZ"/>
    <property type="match status" value="1"/>
</dbReference>
<dbReference type="FunFam" id="3.30.70.1630:FF:000001">
    <property type="entry name" value="tRNA-modifying protein YgfZ"/>
    <property type="match status" value="1"/>
</dbReference>
<dbReference type="Gene3D" id="2.40.30.160">
    <property type="match status" value="1"/>
</dbReference>
<dbReference type="Gene3D" id="3.30.70.1630">
    <property type="match status" value="1"/>
</dbReference>
<dbReference type="Gene3D" id="3.30.70.1400">
    <property type="entry name" value="Aminomethyltransferase beta-barrel domains"/>
    <property type="match status" value="1"/>
</dbReference>
<dbReference type="HAMAP" id="MF_01175">
    <property type="entry name" value="tRNA_modifying_YgfZ"/>
    <property type="match status" value="1"/>
</dbReference>
<dbReference type="InterPro" id="IPR029043">
    <property type="entry name" value="GcvT/YgfZ_C"/>
</dbReference>
<dbReference type="InterPro" id="IPR023758">
    <property type="entry name" value="tRNA-modifying_YgfZ"/>
</dbReference>
<dbReference type="InterPro" id="IPR045179">
    <property type="entry name" value="YgfZ/GcvT"/>
</dbReference>
<dbReference type="InterPro" id="IPR017703">
    <property type="entry name" value="YgfZ/GcvT_CS"/>
</dbReference>
<dbReference type="InterPro" id="IPR048451">
    <property type="entry name" value="YgfZ_barrel"/>
</dbReference>
<dbReference type="NCBIfam" id="NF007110">
    <property type="entry name" value="PRK09559.1"/>
    <property type="match status" value="1"/>
</dbReference>
<dbReference type="NCBIfam" id="TIGR03317">
    <property type="entry name" value="ygfZ_signature"/>
    <property type="match status" value="1"/>
</dbReference>
<dbReference type="PANTHER" id="PTHR22602">
    <property type="entry name" value="TRANSFERASE CAF17, MITOCHONDRIAL-RELATED"/>
    <property type="match status" value="1"/>
</dbReference>
<dbReference type="PANTHER" id="PTHR22602:SF0">
    <property type="entry name" value="TRANSFERASE CAF17, MITOCHONDRIAL-RELATED"/>
    <property type="match status" value="1"/>
</dbReference>
<dbReference type="Pfam" id="PF21130">
    <property type="entry name" value="YgfZ_barrel"/>
    <property type="match status" value="1"/>
</dbReference>
<dbReference type="SUPFAM" id="SSF101790">
    <property type="entry name" value="Aminomethyltransferase beta-barrel domain"/>
    <property type="match status" value="1"/>
</dbReference>
<dbReference type="SUPFAM" id="SSF103025">
    <property type="entry name" value="Folate-binding domain"/>
    <property type="match status" value="1"/>
</dbReference>
<reference key="1">
    <citation type="journal article" date="2006" name="Genome Res.">
        <title>Massive genome erosion and functional adaptations provide insights into the symbiotic lifestyle of Sodalis glossinidius in the tsetse host.</title>
        <authorList>
            <person name="Toh H."/>
            <person name="Weiss B.L."/>
            <person name="Perkin S.A.H."/>
            <person name="Yamashita A."/>
            <person name="Oshima K."/>
            <person name="Hattori M."/>
            <person name="Aksoy S."/>
        </authorList>
    </citation>
    <scope>NUCLEOTIDE SEQUENCE [LARGE SCALE GENOMIC DNA]</scope>
    <source>
        <strain>morsitans</strain>
    </source>
</reference>
<gene>
    <name type="ordered locus">SG1997</name>
</gene>
<protein>
    <recommendedName>
        <fullName evidence="1">tRNA-modifying protein YgfZ</fullName>
    </recommendedName>
</protein>
<name>YGFZ_SODGM</name>
<feature type="chain" id="PRO_0000262902" description="tRNA-modifying protein YgfZ">
    <location>
        <begin position="1"/>
        <end position="328"/>
    </location>
</feature>
<feature type="binding site" evidence="1">
    <location>
        <position position="28"/>
    </location>
    <ligand>
        <name>folate</name>
        <dbReference type="ChEBI" id="CHEBI:62501"/>
    </ligand>
</feature>
<feature type="binding site" evidence="1">
    <location>
        <position position="190"/>
    </location>
    <ligand>
        <name>folate</name>
        <dbReference type="ChEBI" id="CHEBI:62501"/>
    </ligand>
</feature>
<comment type="function">
    <text evidence="1">Folate-binding protein involved in regulating the level of ATP-DnaA and in the modification of some tRNAs. It is probably a key factor in regulatory networks that act via tRNA modification, such as initiation of chromosomal replication.</text>
</comment>
<comment type="subcellular location">
    <subcellularLocation>
        <location evidence="1">Cytoplasm</location>
    </subcellularLocation>
</comment>
<comment type="similarity">
    <text evidence="1">Belongs to the tRNA-modifying YgfZ family.</text>
</comment>
<accession>Q2NRF3</accession>
<evidence type="ECO:0000255" key="1">
    <source>
        <dbReference type="HAMAP-Rule" id="MF_01175"/>
    </source>
</evidence>
<proteinExistence type="inferred from homology"/>
<sequence>MSSKVPFPPRLPLPSSHLPLTLISLEDWALVTLNGADTVKYLQGQLTCDVASLDADRFSFAAHCDAKGKMFSHLCVFHHHDGMAFIERRSVRDSQLAELKKYAVFSKTTITADDDAVLLGVAGFQAQAALGGLFTSVPNAAHPVAHHQDTTLLYFSLPAPRFLLITTPAVRDALQHKLEGQAQLNDSQQWLALDIEAGYPVIDSANGTQFIPQAANVQALDGISFNKGCYAGQEMVARAKYRGANKRALYWLAGKASHPPAAGDDLELKMGDNWRRTGTVLAACQLEDGSVWVQAVLNNDLASDSLLHVRDDSAGALSVQPLPYAIGE</sequence>
<organism>
    <name type="scientific">Sodalis glossinidius (strain morsitans)</name>
    <dbReference type="NCBI Taxonomy" id="343509"/>
    <lineage>
        <taxon>Bacteria</taxon>
        <taxon>Pseudomonadati</taxon>
        <taxon>Pseudomonadota</taxon>
        <taxon>Gammaproteobacteria</taxon>
        <taxon>Enterobacterales</taxon>
        <taxon>Bruguierivoracaceae</taxon>
        <taxon>Sodalis</taxon>
    </lineage>
</organism>
<keyword id="KW-0963">Cytoplasm</keyword>
<keyword id="KW-0290">Folate-binding</keyword>
<keyword id="KW-0819">tRNA processing</keyword>